<proteinExistence type="evidence at protein level"/>
<sequence>NGLCCSQYGFCGTTSQYCSRANGCQSN</sequence>
<keyword id="KW-0929">Antimicrobial</keyword>
<keyword id="KW-0147">Chitin-binding</keyword>
<keyword id="KW-0903">Direct protein sequencing</keyword>
<keyword id="KW-1015">Disulfide bond</keyword>
<keyword id="KW-0295">Fungicide</keyword>
<feature type="peptide" id="PRO_0000452812" description="Morintide mO5" evidence="3">
    <location>
        <begin position="1"/>
        <end position="27"/>
    </location>
</feature>
<feature type="domain" description="Chitin-binding type-1" evidence="2">
    <location>
        <begin position="1"/>
        <end position="27"/>
    </location>
</feature>
<feature type="disulfide bond" evidence="2">
    <location>
        <begin position="4"/>
        <end position="18"/>
    </location>
</feature>
<feature type="unsure residue" description="L or I" evidence="3">
    <location>
        <position position="3"/>
    </location>
</feature>
<feature type="unsure residue" description="Q or K" evidence="3">
    <location>
        <position position="7"/>
    </location>
</feature>
<feature type="unsure residue" description="Q or K" evidence="3">
    <location>
        <position position="16"/>
    </location>
</feature>
<feature type="unsure residue" description="Q or K" evidence="3">
    <location>
        <position position="25"/>
    </location>
</feature>
<feature type="non-terminal residue" evidence="4">
    <location>
        <position position="1"/>
    </location>
</feature>
<feature type="non-terminal residue" evidence="4">
    <location>
        <position position="27"/>
    </location>
</feature>
<accession>C0HLV4</accession>
<organism evidence="4">
    <name type="scientific">Moringa oleifera</name>
    <name type="common">Horseradish tree</name>
    <name type="synonym">Moringa pterygosperma</name>
    <dbReference type="NCBI Taxonomy" id="3735"/>
    <lineage>
        <taxon>Eukaryota</taxon>
        <taxon>Viridiplantae</taxon>
        <taxon>Streptophyta</taxon>
        <taxon>Embryophyta</taxon>
        <taxon>Tracheophyta</taxon>
        <taxon>Spermatophyta</taxon>
        <taxon>Magnoliopsida</taxon>
        <taxon>eudicotyledons</taxon>
        <taxon>Gunneridae</taxon>
        <taxon>Pentapetalae</taxon>
        <taxon>rosids</taxon>
        <taxon>malvids</taxon>
        <taxon>Brassicales</taxon>
        <taxon>Moringaceae</taxon>
        <taxon>Moringa</taxon>
    </lineage>
</organism>
<evidence type="ECO:0000250" key="1">
    <source>
        <dbReference type="UniProtKB" id="A0A1S6EK91"/>
    </source>
</evidence>
<evidence type="ECO:0000255" key="2">
    <source>
        <dbReference type="PROSITE-ProRule" id="PRU00261"/>
    </source>
</evidence>
<evidence type="ECO:0000269" key="3">
    <source>
    </source>
</evidence>
<evidence type="ECO:0000303" key="4">
    <source>
    </source>
</evidence>
<evidence type="ECO:0000305" key="5"/>
<dbReference type="SMR" id="C0HLV4"/>
<dbReference type="GO" id="GO:0008061">
    <property type="term" value="F:chitin binding"/>
    <property type="evidence" value="ECO:0007669"/>
    <property type="project" value="UniProtKB-KW"/>
</dbReference>
<dbReference type="GO" id="GO:0050832">
    <property type="term" value="P:defense response to fungus"/>
    <property type="evidence" value="ECO:0007669"/>
    <property type="project" value="UniProtKB-KW"/>
</dbReference>
<dbReference type="GO" id="GO:0031640">
    <property type="term" value="P:killing of cells of another organism"/>
    <property type="evidence" value="ECO:0007669"/>
    <property type="project" value="UniProtKB-KW"/>
</dbReference>
<dbReference type="Gene3D" id="3.30.60.10">
    <property type="entry name" value="Endochitinase-like"/>
    <property type="match status" value="1"/>
</dbReference>
<dbReference type="InterPro" id="IPR001002">
    <property type="entry name" value="Chitin-bd_1"/>
</dbReference>
<dbReference type="InterPro" id="IPR036861">
    <property type="entry name" value="Endochitinase-like_sf"/>
</dbReference>
<dbReference type="Pfam" id="PF00187">
    <property type="entry name" value="Chitin_bind_1"/>
    <property type="match status" value="1"/>
</dbReference>
<dbReference type="SUPFAM" id="SSF57016">
    <property type="entry name" value="Plant lectins/antimicrobial peptides"/>
    <property type="match status" value="1"/>
</dbReference>
<dbReference type="PROSITE" id="PS50941">
    <property type="entry name" value="CHIT_BIND_I_2"/>
    <property type="match status" value="1"/>
</dbReference>
<name>MO5_MOROL</name>
<comment type="function">
    <text evidence="1">Chitin-binding protein which functions in defense against chitin-containing fungal pathogens.</text>
</comment>
<comment type="tissue specificity">
    <text evidence="3">Seeds (at protein level).</text>
</comment>
<comment type="mass spectrometry"/>
<comment type="biotechnology">
    <text evidence="3">Has potential use as a flocculating agent in water treatment processes.</text>
</comment>
<reference evidence="5" key="1">
    <citation type="journal article" date="2020" name="J. Proteomics">
        <title>Mo-HLPs: New flocculating agents identified from Moringa oleifera seeds belong to the hevein-like peptide family.</title>
        <authorList>
            <person name="Sousa A.M.P."/>
            <person name="Salles H.O."/>
            <person name="Oliveira H.D."/>
            <person name="Souza B.B.P."/>
            <person name="Cardozo Filho J.L."/>
            <person name="Sifuentes D.N."/>
            <person name="Prates M.V."/>
            <person name="Bloch Junior C."/>
            <person name="Bemquerer M.P."/>
            <person name="Egito A.S.D."/>
        </authorList>
    </citation>
    <scope>PROTEIN SEQUENCE</scope>
    <scope>IDENTIFICATION BY MASS SPECTROMETRY</scope>
    <scope>TISSUE SPECIFICITY</scope>
    <scope>BIOTECHNOLOGY</scope>
    <source>
        <tissue evidence="4">Seed</tissue>
    </source>
</reference>
<protein>
    <recommendedName>
        <fullName evidence="5">Morintide mO5</fullName>
    </recommendedName>
    <alternativeName>
        <fullName evidence="4">Morintide hevein-like peptide 1</fullName>
        <shortName evidence="4">Mo-HLP1</shortName>
    </alternativeName>
</protein>